<accession>B1I1I9</accession>
<sequence>MPTAAVFNIEGQQVGEIELSEAVFGQPVNDAVLHEVVVMQLANRRQGTHDTKTRSEVRGGGRKPWRQKGTGRARHGTIRSPIWRGGGIVFGPHPRDYSYRVPKKVKRLALKSALATKVDAGRILVLDALELPGPKTKEMARILANLKAGEGALVVTAERNVNVEKSARNLPGVKSLEARQLNVYDLLNHPHLIITRDAVARVEEVLA</sequence>
<comment type="function">
    <text evidence="1">One of the primary rRNA binding proteins, this protein initially binds near the 5'-end of the 23S rRNA. It is important during the early stages of 50S assembly. It makes multiple contacts with different domains of the 23S rRNA in the assembled 50S subunit and ribosome.</text>
</comment>
<comment type="function">
    <text evidence="1">Forms part of the polypeptide exit tunnel.</text>
</comment>
<comment type="subunit">
    <text evidence="1">Part of the 50S ribosomal subunit.</text>
</comment>
<comment type="similarity">
    <text evidence="1">Belongs to the universal ribosomal protein uL4 family.</text>
</comment>
<protein>
    <recommendedName>
        <fullName evidence="1">Large ribosomal subunit protein uL4</fullName>
    </recommendedName>
    <alternativeName>
        <fullName evidence="3">50S ribosomal protein L4</fullName>
    </alternativeName>
</protein>
<proteinExistence type="inferred from homology"/>
<feature type="chain" id="PRO_1000142114" description="Large ribosomal subunit protein uL4">
    <location>
        <begin position="1"/>
        <end position="207"/>
    </location>
</feature>
<feature type="region of interest" description="Disordered" evidence="2">
    <location>
        <begin position="44"/>
        <end position="77"/>
    </location>
</feature>
<feature type="compositionally biased region" description="Basic and acidic residues" evidence="2">
    <location>
        <begin position="47"/>
        <end position="59"/>
    </location>
</feature>
<feature type="compositionally biased region" description="Basic residues" evidence="2">
    <location>
        <begin position="60"/>
        <end position="77"/>
    </location>
</feature>
<dbReference type="EMBL" id="CP000860">
    <property type="protein sequence ID" value="ACA58787.1"/>
    <property type="molecule type" value="Genomic_DNA"/>
</dbReference>
<dbReference type="RefSeq" id="WP_012301379.1">
    <property type="nucleotide sequence ID" value="NC_010424.1"/>
</dbReference>
<dbReference type="SMR" id="B1I1I9"/>
<dbReference type="STRING" id="477974.Daud_0226"/>
<dbReference type="KEGG" id="dau:Daud_0226"/>
<dbReference type="eggNOG" id="COG0088">
    <property type="taxonomic scope" value="Bacteria"/>
</dbReference>
<dbReference type="HOGENOM" id="CLU_041575_5_2_9"/>
<dbReference type="OrthoDB" id="9803201at2"/>
<dbReference type="Proteomes" id="UP000008544">
    <property type="component" value="Chromosome"/>
</dbReference>
<dbReference type="GO" id="GO:1990904">
    <property type="term" value="C:ribonucleoprotein complex"/>
    <property type="evidence" value="ECO:0007669"/>
    <property type="project" value="UniProtKB-KW"/>
</dbReference>
<dbReference type="GO" id="GO:0005840">
    <property type="term" value="C:ribosome"/>
    <property type="evidence" value="ECO:0007669"/>
    <property type="project" value="UniProtKB-KW"/>
</dbReference>
<dbReference type="GO" id="GO:0019843">
    <property type="term" value="F:rRNA binding"/>
    <property type="evidence" value="ECO:0007669"/>
    <property type="project" value="UniProtKB-UniRule"/>
</dbReference>
<dbReference type="GO" id="GO:0003735">
    <property type="term" value="F:structural constituent of ribosome"/>
    <property type="evidence" value="ECO:0007669"/>
    <property type="project" value="InterPro"/>
</dbReference>
<dbReference type="GO" id="GO:0006412">
    <property type="term" value="P:translation"/>
    <property type="evidence" value="ECO:0007669"/>
    <property type="project" value="UniProtKB-UniRule"/>
</dbReference>
<dbReference type="Gene3D" id="3.40.1370.10">
    <property type="match status" value="1"/>
</dbReference>
<dbReference type="HAMAP" id="MF_01328_B">
    <property type="entry name" value="Ribosomal_uL4_B"/>
    <property type="match status" value="1"/>
</dbReference>
<dbReference type="InterPro" id="IPR002136">
    <property type="entry name" value="Ribosomal_uL4"/>
</dbReference>
<dbReference type="InterPro" id="IPR013005">
    <property type="entry name" value="Ribosomal_uL4-like"/>
</dbReference>
<dbReference type="InterPro" id="IPR023574">
    <property type="entry name" value="Ribosomal_uL4_dom_sf"/>
</dbReference>
<dbReference type="NCBIfam" id="TIGR03953">
    <property type="entry name" value="rplD_bact"/>
    <property type="match status" value="1"/>
</dbReference>
<dbReference type="PANTHER" id="PTHR10746">
    <property type="entry name" value="50S RIBOSOMAL PROTEIN L4"/>
    <property type="match status" value="1"/>
</dbReference>
<dbReference type="PANTHER" id="PTHR10746:SF6">
    <property type="entry name" value="LARGE RIBOSOMAL SUBUNIT PROTEIN UL4M"/>
    <property type="match status" value="1"/>
</dbReference>
<dbReference type="Pfam" id="PF00573">
    <property type="entry name" value="Ribosomal_L4"/>
    <property type="match status" value="1"/>
</dbReference>
<dbReference type="SUPFAM" id="SSF52166">
    <property type="entry name" value="Ribosomal protein L4"/>
    <property type="match status" value="1"/>
</dbReference>
<organism>
    <name type="scientific">Desulforudis audaxviator (strain MP104C)</name>
    <dbReference type="NCBI Taxonomy" id="477974"/>
    <lineage>
        <taxon>Bacteria</taxon>
        <taxon>Bacillati</taxon>
        <taxon>Bacillota</taxon>
        <taxon>Clostridia</taxon>
        <taxon>Thermoanaerobacterales</taxon>
        <taxon>Candidatus Desulforudaceae</taxon>
        <taxon>Candidatus Desulforudis</taxon>
    </lineage>
</organism>
<keyword id="KW-1185">Reference proteome</keyword>
<keyword id="KW-0687">Ribonucleoprotein</keyword>
<keyword id="KW-0689">Ribosomal protein</keyword>
<keyword id="KW-0694">RNA-binding</keyword>
<keyword id="KW-0699">rRNA-binding</keyword>
<name>RL4_DESAP</name>
<reference key="1">
    <citation type="submission" date="2007-10" db="EMBL/GenBank/DDBJ databases">
        <title>Complete sequence of chromosome of Desulforudis audaxviator MP104C.</title>
        <authorList>
            <person name="Copeland A."/>
            <person name="Lucas S."/>
            <person name="Lapidus A."/>
            <person name="Barry K."/>
            <person name="Glavina del Rio T."/>
            <person name="Dalin E."/>
            <person name="Tice H."/>
            <person name="Bruce D."/>
            <person name="Pitluck S."/>
            <person name="Lowry S.R."/>
            <person name="Larimer F."/>
            <person name="Land M.L."/>
            <person name="Hauser L."/>
            <person name="Kyrpides N."/>
            <person name="Ivanova N.N."/>
            <person name="Richardson P."/>
        </authorList>
    </citation>
    <scope>NUCLEOTIDE SEQUENCE [LARGE SCALE GENOMIC DNA]</scope>
    <source>
        <strain>MP104C</strain>
    </source>
</reference>
<gene>
    <name evidence="1" type="primary">rplD</name>
    <name type="ordered locus">Daud_0226</name>
</gene>
<evidence type="ECO:0000255" key="1">
    <source>
        <dbReference type="HAMAP-Rule" id="MF_01328"/>
    </source>
</evidence>
<evidence type="ECO:0000256" key="2">
    <source>
        <dbReference type="SAM" id="MobiDB-lite"/>
    </source>
</evidence>
<evidence type="ECO:0000305" key="3"/>